<name>PYRG_BACVZ</name>
<accession>A7Z9T4</accession>
<sequence length="535" mass="59883">MTKYIFVTGGVVSSLGKGIVAASLGRLLKNRGMSVTIQKFDPYINVDPGTMSPYQHGEVFVTDDGAETDLDLGHYERFIDINLNRFSNVTTGKIYSAVLKKERRGDYLGGTVQVIPHITNELKDRVYRAGKETNADVVITEIGGTVGDIESLPFLEAIRQMKSDIGHENVMYIHCTLVPYIKAAGELKTKPTQHSVKELRSLGIQPNIIVVRTEMPISQDMKDKIALFCDIDTKAVIECEDADNLYSIPLNLQEQGLDKLVCDHMKLECKDPDMTEWKDLVTKVKNLSKTITISLVGKYVELQDAYISVVESLRHAGYAFDADVKIKWINAEEVTESNIQELTGGTDGIIVPGGFGDRGVEGKIIAAKYARENKIPFFGICLGMQIASIEYARNVLGLEGAHSAEIDPSTPYPIIDLLPEQKDVEDLGGTLRLGLYPCKLQEDTKAFEAYADEVVYERHRHRYEFNNEYRQQMEENGFVFSGTSPDGRLVEIIELKDHPWYVACQFHPEFKSRPTRPQPLFKDFIGASVQAAEQK</sequence>
<comment type="function">
    <text evidence="1">Catalyzes the ATP-dependent amination of UTP to CTP with either L-glutamine or ammonia as the source of nitrogen. Regulates intracellular CTP levels through interactions with the four ribonucleotide triphosphates.</text>
</comment>
<comment type="catalytic activity">
    <reaction evidence="1">
        <text>UTP + L-glutamine + ATP + H2O = CTP + L-glutamate + ADP + phosphate + 2 H(+)</text>
        <dbReference type="Rhea" id="RHEA:26426"/>
        <dbReference type="ChEBI" id="CHEBI:15377"/>
        <dbReference type="ChEBI" id="CHEBI:15378"/>
        <dbReference type="ChEBI" id="CHEBI:29985"/>
        <dbReference type="ChEBI" id="CHEBI:30616"/>
        <dbReference type="ChEBI" id="CHEBI:37563"/>
        <dbReference type="ChEBI" id="CHEBI:43474"/>
        <dbReference type="ChEBI" id="CHEBI:46398"/>
        <dbReference type="ChEBI" id="CHEBI:58359"/>
        <dbReference type="ChEBI" id="CHEBI:456216"/>
        <dbReference type="EC" id="6.3.4.2"/>
    </reaction>
</comment>
<comment type="catalytic activity">
    <reaction evidence="1">
        <text>L-glutamine + H2O = L-glutamate + NH4(+)</text>
        <dbReference type="Rhea" id="RHEA:15889"/>
        <dbReference type="ChEBI" id="CHEBI:15377"/>
        <dbReference type="ChEBI" id="CHEBI:28938"/>
        <dbReference type="ChEBI" id="CHEBI:29985"/>
        <dbReference type="ChEBI" id="CHEBI:58359"/>
    </reaction>
</comment>
<comment type="catalytic activity">
    <reaction evidence="1">
        <text>UTP + NH4(+) + ATP = CTP + ADP + phosphate + 2 H(+)</text>
        <dbReference type="Rhea" id="RHEA:16597"/>
        <dbReference type="ChEBI" id="CHEBI:15378"/>
        <dbReference type="ChEBI" id="CHEBI:28938"/>
        <dbReference type="ChEBI" id="CHEBI:30616"/>
        <dbReference type="ChEBI" id="CHEBI:37563"/>
        <dbReference type="ChEBI" id="CHEBI:43474"/>
        <dbReference type="ChEBI" id="CHEBI:46398"/>
        <dbReference type="ChEBI" id="CHEBI:456216"/>
    </reaction>
</comment>
<comment type="activity regulation">
    <text evidence="1">Allosterically activated by GTP, when glutamine is the substrate; GTP has no effect on the reaction when ammonia is the substrate. The allosteric effector GTP functions by stabilizing the protein conformation that binds the tetrahedral intermediate(s) formed during glutamine hydrolysis. Inhibited by the product CTP, via allosteric rather than competitive inhibition.</text>
</comment>
<comment type="pathway">
    <text evidence="1">Pyrimidine metabolism; CTP biosynthesis via de novo pathway; CTP from UDP: step 2/2.</text>
</comment>
<comment type="subunit">
    <text evidence="1">Homotetramer.</text>
</comment>
<comment type="miscellaneous">
    <text evidence="1">CTPSs have evolved a hybrid strategy for distinguishing between UTP and CTP. The overlapping regions of the product feedback inhibitory and substrate sites recognize a common feature in both compounds, the triphosphate moiety. To differentiate isosteric substrate and product pyrimidine rings, an additional pocket far from the expected kinase/ligase catalytic site, specifically recognizes the cytosine and ribose portions of the product inhibitor.</text>
</comment>
<comment type="similarity">
    <text evidence="1">Belongs to the CTP synthase family.</text>
</comment>
<proteinExistence type="inferred from homology"/>
<feature type="chain" id="PRO_1000139377" description="CTP synthase">
    <location>
        <begin position="1"/>
        <end position="535"/>
    </location>
</feature>
<feature type="domain" description="Glutamine amidotransferase type-1" evidence="1">
    <location>
        <begin position="292"/>
        <end position="534"/>
    </location>
</feature>
<feature type="region of interest" description="Amidoligase domain" evidence="1">
    <location>
        <begin position="1"/>
        <end position="267"/>
    </location>
</feature>
<feature type="active site" description="Nucleophile; for glutamine hydrolysis" evidence="1">
    <location>
        <position position="381"/>
    </location>
</feature>
<feature type="active site" evidence="1">
    <location>
        <position position="507"/>
    </location>
</feature>
<feature type="active site" evidence="1">
    <location>
        <position position="509"/>
    </location>
</feature>
<feature type="binding site" evidence="1">
    <location>
        <position position="13"/>
    </location>
    <ligand>
        <name>CTP</name>
        <dbReference type="ChEBI" id="CHEBI:37563"/>
        <note>allosteric inhibitor</note>
    </ligand>
</feature>
<feature type="binding site" evidence="1">
    <location>
        <position position="13"/>
    </location>
    <ligand>
        <name>UTP</name>
        <dbReference type="ChEBI" id="CHEBI:46398"/>
    </ligand>
</feature>
<feature type="binding site" evidence="1">
    <location>
        <begin position="14"/>
        <end position="19"/>
    </location>
    <ligand>
        <name>ATP</name>
        <dbReference type="ChEBI" id="CHEBI:30616"/>
    </ligand>
</feature>
<feature type="binding site" evidence="1">
    <location>
        <position position="54"/>
    </location>
    <ligand>
        <name>L-glutamine</name>
        <dbReference type="ChEBI" id="CHEBI:58359"/>
    </ligand>
</feature>
<feature type="binding site" evidence="1">
    <location>
        <position position="71"/>
    </location>
    <ligand>
        <name>ATP</name>
        <dbReference type="ChEBI" id="CHEBI:30616"/>
    </ligand>
</feature>
<feature type="binding site" evidence="1">
    <location>
        <position position="71"/>
    </location>
    <ligand>
        <name>Mg(2+)</name>
        <dbReference type="ChEBI" id="CHEBI:18420"/>
    </ligand>
</feature>
<feature type="binding site" evidence="1">
    <location>
        <position position="141"/>
    </location>
    <ligand>
        <name>Mg(2+)</name>
        <dbReference type="ChEBI" id="CHEBI:18420"/>
    </ligand>
</feature>
<feature type="binding site" evidence="1">
    <location>
        <begin position="148"/>
        <end position="150"/>
    </location>
    <ligand>
        <name>CTP</name>
        <dbReference type="ChEBI" id="CHEBI:37563"/>
        <note>allosteric inhibitor</note>
    </ligand>
</feature>
<feature type="binding site" evidence="1">
    <location>
        <begin position="188"/>
        <end position="193"/>
    </location>
    <ligand>
        <name>CTP</name>
        <dbReference type="ChEBI" id="CHEBI:37563"/>
        <note>allosteric inhibitor</note>
    </ligand>
</feature>
<feature type="binding site" evidence="1">
    <location>
        <begin position="188"/>
        <end position="193"/>
    </location>
    <ligand>
        <name>UTP</name>
        <dbReference type="ChEBI" id="CHEBI:46398"/>
    </ligand>
</feature>
<feature type="binding site" evidence="1">
    <location>
        <position position="224"/>
    </location>
    <ligand>
        <name>CTP</name>
        <dbReference type="ChEBI" id="CHEBI:37563"/>
        <note>allosteric inhibitor</note>
    </ligand>
</feature>
<feature type="binding site" evidence="1">
    <location>
        <position position="224"/>
    </location>
    <ligand>
        <name>UTP</name>
        <dbReference type="ChEBI" id="CHEBI:46398"/>
    </ligand>
</feature>
<feature type="binding site" evidence="1">
    <location>
        <position position="354"/>
    </location>
    <ligand>
        <name>L-glutamine</name>
        <dbReference type="ChEBI" id="CHEBI:58359"/>
    </ligand>
</feature>
<feature type="binding site" evidence="1">
    <location>
        <begin position="382"/>
        <end position="385"/>
    </location>
    <ligand>
        <name>L-glutamine</name>
        <dbReference type="ChEBI" id="CHEBI:58359"/>
    </ligand>
</feature>
<feature type="binding site" evidence="1">
    <location>
        <position position="405"/>
    </location>
    <ligand>
        <name>L-glutamine</name>
        <dbReference type="ChEBI" id="CHEBI:58359"/>
    </ligand>
</feature>
<feature type="binding site" evidence="1">
    <location>
        <position position="462"/>
    </location>
    <ligand>
        <name>L-glutamine</name>
        <dbReference type="ChEBI" id="CHEBI:58359"/>
    </ligand>
</feature>
<reference key="1">
    <citation type="journal article" date="2007" name="Nat. Biotechnol.">
        <title>Comparative analysis of the complete genome sequence of the plant growth-promoting bacterium Bacillus amyloliquefaciens FZB42.</title>
        <authorList>
            <person name="Chen X.H."/>
            <person name="Koumoutsi A."/>
            <person name="Scholz R."/>
            <person name="Eisenreich A."/>
            <person name="Schneider K."/>
            <person name="Heinemeyer I."/>
            <person name="Morgenstern B."/>
            <person name="Voss B."/>
            <person name="Hess W.R."/>
            <person name="Reva O."/>
            <person name="Junge H."/>
            <person name="Voigt B."/>
            <person name="Jungblut P.R."/>
            <person name="Vater J."/>
            <person name="Suessmuth R."/>
            <person name="Liesegang H."/>
            <person name="Strittmatter A."/>
            <person name="Gottschalk G."/>
            <person name="Borriss R."/>
        </authorList>
    </citation>
    <scope>NUCLEOTIDE SEQUENCE [LARGE SCALE GENOMIC DNA]</scope>
    <source>
        <strain>DSM 23117 / BGSC 10A6 / LMG 26770 / FZB42</strain>
    </source>
</reference>
<organism>
    <name type="scientific">Bacillus velezensis (strain DSM 23117 / BGSC 10A6 / LMG 26770 / FZB42)</name>
    <name type="common">Bacillus amyloliquefaciens subsp. plantarum</name>
    <dbReference type="NCBI Taxonomy" id="326423"/>
    <lineage>
        <taxon>Bacteria</taxon>
        <taxon>Bacillati</taxon>
        <taxon>Bacillota</taxon>
        <taxon>Bacilli</taxon>
        <taxon>Bacillales</taxon>
        <taxon>Bacillaceae</taxon>
        <taxon>Bacillus</taxon>
        <taxon>Bacillus amyloliquefaciens group</taxon>
    </lineage>
</organism>
<protein>
    <recommendedName>
        <fullName evidence="1">CTP synthase</fullName>
        <ecNumber evidence="1">6.3.4.2</ecNumber>
    </recommendedName>
    <alternativeName>
        <fullName evidence="1">Cytidine 5'-triphosphate synthase</fullName>
    </alternativeName>
    <alternativeName>
        <fullName evidence="1">Cytidine triphosphate synthetase</fullName>
        <shortName evidence="1">CTP synthetase</shortName>
        <shortName evidence="1">CTPS</shortName>
    </alternativeName>
    <alternativeName>
        <fullName evidence="1">UTP--ammonia ligase</fullName>
    </alternativeName>
</protein>
<evidence type="ECO:0000255" key="1">
    <source>
        <dbReference type="HAMAP-Rule" id="MF_01227"/>
    </source>
</evidence>
<dbReference type="EC" id="6.3.4.2" evidence="1"/>
<dbReference type="EMBL" id="CP000560">
    <property type="protein sequence ID" value="ABS75760.1"/>
    <property type="molecule type" value="Genomic_DNA"/>
</dbReference>
<dbReference type="RefSeq" id="WP_003151098.1">
    <property type="nucleotide sequence ID" value="NC_009725.2"/>
</dbReference>
<dbReference type="SMR" id="A7Z9T4"/>
<dbReference type="GeneID" id="93082575"/>
<dbReference type="KEGG" id="bay:RBAM_034310"/>
<dbReference type="HOGENOM" id="CLU_011675_5_0_9"/>
<dbReference type="UniPathway" id="UPA00159">
    <property type="reaction ID" value="UER00277"/>
</dbReference>
<dbReference type="Proteomes" id="UP000001120">
    <property type="component" value="Chromosome"/>
</dbReference>
<dbReference type="GO" id="GO:0005829">
    <property type="term" value="C:cytosol"/>
    <property type="evidence" value="ECO:0007669"/>
    <property type="project" value="TreeGrafter"/>
</dbReference>
<dbReference type="GO" id="GO:0005524">
    <property type="term" value="F:ATP binding"/>
    <property type="evidence" value="ECO:0007669"/>
    <property type="project" value="UniProtKB-KW"/>
</dbReference>
<dbReference type="GO" id="GO:0003883">
    <property type="term" value="F:CTP synthase activity"/>
    <property type="evidence" value="ECO:0007669"/>
    <property type="project" value="UniProtKB-UniRule"/>
</dbReference>
<dbReference type="GO" id="GO:0004359">
    <property type="term" value="F:glutaminase activity"/>
    <property type="evidence" value="ECO:0007669"/>
    <property type="project" value="RHEA"/>
</dbReference>
<dbReference type="GO" id="GO:0042802">
    <property type="term" value="F:identical protein binding"/>
    <property type="evidence" value="ECO:0007669"/>
    <property type="project" value="TreeGrafter"/>
</dbReference>
<dbReference type="GO" id="GO:0046872">
    <property type="term" value="F:metal ion binding"/>
    <property type="evidence" value="ECO:0007669"/>
    <property type="project" value="UniProtKB-KW"/>
</dbReference>
<dbReference type="GO" id="GO:0044210">
    <property type="term" value="P:'de novo' CTP biosynthetic process"/>
    <property type="evidence" value="ECO:0007669"/>
    <property type="project" value="UniProtKB-UniRule"/>
</dbReference>
<dbReference type="GO" id="GO:0019856">
    <property type="term" value="P:pyrimidine nucleobase biosynthetic process"/>
    <property type="evidence" value="ECO:0007669"/>
    <property type="project" value="TreeGrafter"/>
</dbReference>
<dbReference type="CDD" id="cd03113">
    <property type="entry name" value="CTPS_N"/>
    <property type="match status" value="1"/>
</dbReference>
<dbReference type="CDD" id="cd01746">
    <property type="entry name" value="GATase1_CTP_Synthase"/>
    <property type="match status" value="1"/>
</dbReference>
<dbReference type="FunFam" id="3.40.50.300:FF:000009">
    <property type="entry name" value="CTP synthase"/>
    <property type="match status" value="1"/>
</dbReference>
<dbReference type="FunFam" id="3.40.50.880:FF:000002">
    <property type="entry name" value="CTP synthase"/>
    <property type="match status" value="1"/>
</dbReference>
<dbReference type="Gene3D" id="3.40.50.880">
    <property type="match status" value="1"/>
</dbReference>
<dbReference type="Gene3D" id="3.40.50.300">
    <property type="entry name" value="P-loop containing nucleotide triphosphate hydrolases"/>
    <property type="match status" value="1"/>
</dbReference>
<dbReference type="HAMAP" id="MF_01227">
    <property type="entry name" value="PyrG"/>
    <property type="match status" value="1"/>
</dbReference>
<dbReference type="InterPro" id="IPR029062">
    <property type="entry name" value="Class_I_gatase-like"/>
</dbReference>
<dbReference type="InterPro" id="IPR004468">
    <property type="entry name" value="CTP_synthase"/>
</dbReference>
<dbReference type="InterPro" id="IPR017456">
    <property type="entry name" value="CTP_synthase_N"/>
</dbReference>
<dbReference type="InterPro" id="IPR017926">
    <property type="entry name" value="GATASE"/>
</dbReference>
<dbReference type="InterPro" id="IPR033828">
    <property type="entry name" value="GATase1_CTP_Synthase"/>
</dbReference>
<dbReference type="InterPro" id="IPR027417">
    <property type="entry name" value="P-loop_NTPase"/>
</dbReference>
<dbReference type="NCBIfam" id="NF003792">
    <property type="entry name" value="PRK05380.1"/>
    <property type="match status" value="1"/>
</dbReference>
<dbReference type="NCBIfam" id="TIGR00337">
    <property type="entry name" value="PyrG"/>
    <property type="match status" value="1"/>
</dbReference>
<dbReference type="PANTHER" id="PTHR11550">
    <property type="entry name" value="CTP SYNTHASE"/>
    <property type="match status" value="1"/>
</dbReference>
<dbReference type="PANTHER" id="PTHR11550:SF0">
    <property type="entry name" value="CTP SYNTHASE-RELATED"/>
    <property type="match status" value="1"/>
</dbReference>
<dbReference type="Pfam" id="PF06418">
    <property type="entry name" value="CTP_synth_N"/>
    <property type="match status" value="1"/>
</dbReference>
<dbReference type="Pfam" id="PF00117">
    <property type="entry name" value="GATase"/>
    <property type="match status" value="1"/>
</dbReference>
<dbReference type="SUPFAM" id="SSF52317">
    <property type="entry name" value="Class I glutamine amidotransferase-like"/>
    <property type="match status" value="1"/>
</dbReference>
<dbReference type="SUPFAM" id="SSF52540">
    <property type="entry name" value="P-loop containing nucleoside triphosphate hydrolases"/>
    <property type="match status" value="1"/>
</dbReference>
<dbReference type="PROSITE" id="PS51273">
    <property type="entry name" value="GATASE_TYPE_1"/>
    <property type="match status" value="1"/>
</dbReference>
<keyword id="KW-0067">ATP-binding</keyword>
<keyword id="KW-0315">Glutamine amidotransferase</keyword>
<keyword id="KW-0436">Ligase</keyword>
<keyword id="KW-0460">Magnesium</keyword>
<keyword id="KW-0479">Metal-binding</keyword>
<keyword id="KW-0547">Nucleotide-binding</keyword>
<keyword id="KW-0665">Pyrimidine biosynthesis</keyword>
<gene>
    <name evidence="1" type="primary">pyrG</name>
    <name type="ordered locus">RBAM_034310</name>
</gene>